<dbReference type="EC" id="7.6.2.11" evidence="1"/>
<dbReference type="EMBL" id="AE017198">
    <property type="protein sequence ID" value="AAS08709.1"/>
    <property type="molecule type" value="Genomic_DNA"/>
</dbReference>
<dbReference type="RefSeq" id="WP_004897689.1">
    <property type="nucleotide sequence ID" value="NC_005362.1"/>
</dbReference>
<dbReference type="SMR" id="Q74K65"/>
<dbReference type="KEGG" id="ljo:LJ_0888"/>
<dbReference type="eggNOG" id="COG3842">
    <property type="taxonomic scope" value="Bacteria"/>
</dbReference>
<dbReference type="HOGENOM" id="CLU_000604_1_1_9"/>
<dbReference type="Proteomes" id="UP000000581">
    <property type="component" value="Chromosome"/>
</dbReference>
<dbReference type="GO" id="GO:0043190">
    <property type="term" value="C:ATP-binding cassette (ABC) transporter complex"/>
    <property type="evidence" value="ECO:0007669"/>
    <property type="project" value="InterPro"/>
</dbReference>
<dbReference type="GO" id="GO:0015594">
    <property type="term" value="F:ABC-type putrescine transporter activity"/>
    <property type="evidence" value="ECO:0007669"/>
    <property type="project" value="InterPro"/>
</dbReference>
<dbReference type="GO" id="GO:0005524">
    <property type="term" value="F:ATP binding"/>
    <property type="evidence" value="ECO:0007669"/>
    <property type="project" value="UniProtKB-KW"/>
</dbReference>
<dbReference type="GO" id="GO:0016887">
    <property type="term" value="F:ATP hydrolysis activity"/>
    <property type="evidence" value="ECO:0007669"/>
    <property type="project" value="InterPro"/>
</dbReference>
<dbReference type="CDD" id="cd03300">
    <property type="entry name" value="ABC_PotA_N"/>
    <property type="match status" value="1"/>
</dbReference>
<dbReference type="FunFam" id="3.40.50.300:FF:000133">
    <property type="entry name" value="Spermidine/putrescine import ATP-binding protein PotA"/>
    <property type="match status" value="1"/>
</dbReference>
<dbReference type="Gene3D" id="2.40.50.100">
    <property type="match status" value="1"/>
</dbReference>
<dbReference type="Gene3D" id="3.40.50.300">
    <property type="entry name" value="P-loop containing nucleotide triphosphate hydrolases"/>
    <property type="match status" value="1"/>
</dbReference>
<dbReference type="InterPro" id="IPR003593">
    <property type="entry name" value="AAA+_ATPase"/>
</dbReference>
<dbReference type="InterPro" id="IPR050093">
    <property type="entry name" value="ABC_SmlMolc_Importer"/>
</dbReference>
<dbReference type="InterPro" id="IPR003439">
    <property type="entry name" value="ABC_transporter-like_ATP-bd"/>
</dbReference>
<dbReference type="InterPro" id="IPR017871">
    <property type="entry name" value="ABC_transporter-like_CS"/>
</dbReference>
<dbReference type="InterPro" id="IPR008995">
    <property type="entry name" value="Mo/tungstate-bd_C_term_dom"/>
</dbReference>
<dbReference type="InterPro" id="IPR027417">
    <property type="entry name" value="P-loop_NTPase"/>
</dbReference>
<dbReference type="InterPro" id="IPR005893">
    <property type="entry name" value="PotA-like"/>
</dbReference>
<dbReference type="InterPro" id="IPR017879">
    <property type="entry name" value="PotA_ATP-bd"/>
</dbReference>
<dbReference type="InterPro" id="IPR013611">
    <property type="entry name" value="Transp-assoc_OB_typ2"/>
</dbReference>
<dbReference type="NCBIfam" id="TIGR01187">
    <property type="entry name" value="potA"/>
    <property type="match status" value="1"/>
</dbReference>
<dbReference type="PANTHER" id="PTHR42781">
    <property type="entry name" value="SPERMIDINE/PUTRESCINE IMPORT ATP-BINDING PROTEIN POTA"/>
    <property type="match status" value="1"/>
</dbReference>
<dbReference type="PANTHER" id="PTHR42781:SF4">
    <property type="entry name" value="SPERMIDINE_PUTRESCINE IMPORT ATP-BINDING PROTEIN POTA"/>
    <property type="match status" value="1"/>
</dbReference>
<dbReference type="Pfam" id="PF00005">
    <property type="entry name" value="ABC_tran"/>
    <property type="match status" value="1"/>
</dbReference>
<dbReference type="Pfam" id="PF08402">
    <property type="entry name" value="TOBE_2"/>
    <property type="match status" value="1"/>
</dbReference>
<dbReference type="SMART" id="SM00382">
    <property type="entry name" value="AAA"/>
    <property type="match status" value="1"/>
</dbReference>
<dbReference type="SUPFAM" id="SSF50331">
    <property type="entry name" value="MOP-like"/>
    <property type="match status" value="1"/>
</dbReference>
<dbReference type="SUPFAM" id="SSF52540">
    <property type="entry name" value="P-loop containing nucleoside triphosphate hydrolases"/>
    <property type="match status" value="1"/>
</dbReference>
<dbReference type="PROSITE" id="PS00211">
    <property type="entry name" value="ABC_TRANSPORTER_1"/>
    <property type="match status" value="1"/>
</dbReference>
<dbReference type="PROSITE" id="PS50893">
    <property type="entry name" value="ABC_TRANSPORTER_2"/>
    <property type="match status" value="1"/>
</dbReference>
<dbReference type="PROSITE" id="PS51305">
    <property type="entry name" value="POTA"/>
    <property type="match status" value="1"/>
</dbReference>
<accession>Q74K65</accession>
<gene>
    <name evidence="1" type="primary">potA</name>
    <name type="ordered locus">LJ_0888</name>
</gene>
<sequence>MSDIIKLKHVRKEYDDGFVALKDINLTIESGKFYSLLGPSGSGKTTILRIIAGFSEPTSGQVFFDGQDITNLDAAKRKINTVFQNYALFPHMNVFENVAFGLQIKKKDKQEIKLAVKEALHMVQLDGFANREISELSGGQQQRVAIARAIVNQPKVLLLDESLSALDKRLRKDMQFELREIQKKLGITFIFVTHDQEEALAMSDEIFVLNEGKIQQSGSPVDIYDEPVNDFVARFIGDSNILSGRMIKDYEVEFGNHRFECADAGIKPGEKVEVVLRPEDLDITDIEHGKLRVVVESQLFLGDHFEIKAIDSDENEWLIHSTNPTKIGKEVGVYFDPEDIHVMRFGESEAEFDKRLEAYEGEE</sequence>
<proteinExistence type="inferred from homology"/>
<name>POTA_LACJO</name>
<evidence type="ECO:0000255" key="1">
    <source>
        <dbReference type="HAMAP-Rule" id="MF_01726"/>
    </source>
</evidence>
<reference key="1">
    <citation type="journal article" date="2004" name="Proc. Natl. Acad. Sci. U.S.A.">
        <title>The genome sequence of the probiotic intestinal bacterium Lactobacillus johnsonii NCC 533.</title>
        <authorList>
            <person name="Pridmore R.D."/>
            <person name="Berger B."/>
            <person name="Desiere F."/>
            <person name="Vilanova D."/>
            <person name="Barretto C."/>
            <person name="Pittet A.-C."/>
            <person name="Zwahlen M.-C."/>
            <person name="Rouvet M."/>
            <person name="Altermann E."/>
            <person name="Barrangou R."/>
            <person name="Mollet B."/>
            <person name="Mercenier A."/>
            <person name="Klaenhammer T."/>
            <person name="Arigoni F."/>
            <person name="Schell M.A."/>
        </authorList>
    </citation>
    <scope>NUCLEOTIDE SEQUENCE [LARGE SCALE GENOMIC DNA]</scope>
    <source>
        <strain>CNCM I-1225 / La1 / NCC 533</strain>
    </source>
</reference>
<feature type="chain" id="PRO_0000286232" description="Spermidine/putrescine import ATP-binding protein PotA">
    <location>
        <begin position="1"/>
        <end position="363"/>
    </location>
</feature>
<feature type="domain" description="ABC transporter" evidence="1">
    <location>
        <begin position="5"/>
        <end position="236"/>
    </location>
</feature>
<feature type="binding site" evidence="1">
    <location>
        <begin position="38"/>
        <end position="45"/>
    </location>
    <ligand>
        <name>ATP</name>
        <dbReference type="ChEBI" id="CHEBI:30616"/>
    </ligand>
</feature>
<organism>
    <name type="scientific">Lactobacillus johnsonii (strain CNCM I-12250 / La1 / NCC 533)</name>
    <dbReference type="NCBI Taxonomy" id="257314"/>
    <lineage>
        <taxon>Bacteria</taxon>
        <taxon>Bacillati</taxon>
        <taxon>Bacillota</taxon>
        <taxon>Bacilli</taxon>
        <taxon>Lactobacillales</taxon>
        <taxon>Lactobacillaceae</taxon>
        <taxon>Lactobacillus</taxon>
    </lineage>
</organism>
<comment type="function">
    <text evidence="1">Part of the ABC transporter complex PotABCD involved in spermidine/putrescine import. Responsible for energy coupling to the transport system.</text>
</comment>
<comment type="catalytic activity">
    <reaction evidence="1">
        <text>ATP + H2O + polyamine-[polyamine-binding protein]Side 1 = ADP + phosphate + polyamineSide 2 + [polyamine-binding protein]Side 1.</text>
        <dbReference type="EC" id="7.6.2.11"/>
    </reaction>
</comment>
<comment type="subunit">
    <text evidence="1">The complex is composed of two ATP-binding proteins (PotA), two transmembrane proteins (PotB and PotC) and a solute-binding protein (PotD).</text>
</comment>
<comment type="subcellular location">
    <subcellularLocation>
        <location evidence="1">Cell membrane</location>
        <topology evidence="1">Peripheral membrane protein</topology>
    </subcellularLocation>
</comment>
<comment type="similarity">
    <text evidence="1">Belongs to the ABC transporter superfamily. Spermidine/putrescine importer (TC 3.A.1.11.1) family.</text>
</comment>
<keyword id="KW-0067">ATP-binding</keyword>
<keyword id="KW-1003">Cell membrane</keyword>
<keyword id="KW-0472">Membrane</keyword>
<keyword id="KW-0547">Nucleotide-binding</keyword>
<keyword id="KW-1278">Translocase</keyword>
<keyword id="KW-0813">Transport</keyword>
<protein>
    <recommendedName>
        <fullName evidence="1">Spermidine/putrescine import ATP-binding protein PotA</fullName>
        <ecNumber evidence="1">7.6.2.11</ecNumber>
    </recommendedName>
</protein>